<comment type="function">
    <text evidence="1 8">Tyrosine-protein kinase that acts as a cell-surface receptor for fibroblast growth factors and plays a role in the regulation of cell proliferation, differentiation and migration, and in regulation of lipid metabolism, bile acid biosynthesis, glucose uptake, vitamin D metabolism and phosphate homeostasis. Required for normal down-regulation of the expression of CYP7A1, the rate-limiting enzyme in bile acid synthesis, in response to FGF19. Phosphorylates PLCG1 and FRS2. Ligand binding leads to the activation of several signaling cascades. Activation of PLCG1 leads to the production of the cellular signaling molecules diacylglycerol and inositol 1,4,5-trisphosphate. Phosphorylation of FRS2 triggers recruitment of GRB2, GAB1, PIK3R1 and SOS1, and mediates activation of RAS, MAPK1/ERK2, MAPK3/ERK1 and the MAP kinase signaling pathway, as well as of the AKT1 signaling pathway. Promotes SRC-dependent phosphorylation of the matrix protease MMP14 and its lysosomal degradation. FGFR4 signaling is down-regulated by receptor internalization and degradation; MMP14 promotes internalization and degradation of FGFR4 (By similarity).</text>
</comment>
<comment type="catalytic activity">
    <reaction evidence="6">
        <text>L-tyrosyl-[protein] + ATP = O-phospho-L-tyrosyl-[protein] + ADP + H(+)</text>
        <dbReference type="Rhea" id="RHEA:10596"/>
        <dbReference type="Rhea" id="RHEA-COMP:10136"/>
        <dbReference type="Rhea" id="RHEA-COMP:20101"/>
        <dbReference type="ChEBI" id="CHEBI:15378"/>
        <dbReference type="ChEBI" id="CHEBI:30616"/>
        <dbReference type="ChEBI" id="CHEBI:46858"/>
        <dbReference type="ChEBI" id="CHEBI:61978"/>
        <dbReference type="ChEBI" id="CHEBI:456216"/>
        <dbReference type="EC" id="2.7.10.1"/>
    </reaction>
</comment>
<comment type="activity regulation">
    <text evidence="1">Present in an inactive conformation in the absence of bound ligand. Ligand binding leads to dimerization and activation by autophosphorylation on tyrosine residues (By similarity).</text>
</comment>
<comment type="subunit">
    <text evidence="2">Monomer. Homodimer after ligand binding. Interacts with FGF1, FGF2, FGF4, FGF6, FGF8, FGF9, FGF16, FGF17, FGF18, FGF19, FGF21 and FGF23 (in vitro). Binding affinity for FGF family members is enhanced by interactions between FGFs and heparan sulfate proteoglycans. Interacts with KLB; this strongly increases the affinity for FGF19 and FGF23. Affinity for FGF19 is strongly increased by KLB and sulfated glycosaminoglycans. KLB and KL both interact with the core-glycosylated FGFR4 in the endoplasmic reticulum and promote its degradation, so that only FGFR4 with fully mature N-glycans is expressed at the cell surface. Identified in a complex with NCAM1, CDH2, PLCG1, FRS2, SRC, SHC1, GAP43 and CTTN. Interacts with MMP14 and HIP1. Interacts with STAT3 (By similarity).</text>
</comment>
<comment type="subcellular location">
    <subcellularLocation>
        <location>Cell membrane</location>
        <topology>Single-pass type I membrane protein</topology>
    </subcellularLocation>
    <subcellularLocation>
        <location evidence="1">Endosome</location>
    </subcellularLocation>
    <subcellularLocation>
        <location evidence="1">Endoplasmic reticulum</location>
    </subcellularLocation>
    <text evidence="1">Internalized from the cell membrane to recycling endosomes, and from there back to the cell membrane.</text>
</comment>
<comment type="PTM">
    <text evidence="1">N-glycosylated. Full maturation of the glycan chains in the Golgi is essential for high affinity interaction with FGF19 (By similarity).</text>
</comment>
<comment type="PTM">
    <text evidence="1">Ubiquitinated. Subject to proteasomal degradation when not fully glycosylated (By similarity).</text>
</comment>
<comment type="PTM">
    <text evidence="1">Autophosphorylated. Binding of FGF family members together with heparan sulfate proteoglycan or heparin promotes receptor dimerization and autophosphorylation on tyrosine residues. Autophosphorylation occurs in trans between the two FGFR molecules present in the dimer (By similarity).</text>
</comment>
<comment type="similarity">
    <text evidence="5">Belongs to the protein kinase superfamily. Tyr protein kinase family. Fibroblast growth factor receptor subfamily.</text>
</comment>
<proteinExistence type="evidence at protein level"/>
<evidence type="ECO:0000250" key="1"/>
<evidence type="ECO:0000250" key="2">
    <source>
        <dbReference type="UniProtKB" id="P22455"/>
    </source>
</evidence>
<evidence type="ECO:0000255" key="3"/>
<evidence type="ECO:0000255" key="4">
    <source>
        <dbReference type="PROSITE-ProRule" id="PRU00114"/>
    </source>
</evidence>
<evidence type="ECO:0000255" key="5">
    <source>
        <dbReference type="PROSITE-ProRule" id="PRU00159"/>
    </source>
</evidence>
<evidence type="ECO:0000255" key="6">
    <source>
        <dbReference type="PROSITE-ProRule" id="PRU10028"/>
    </source>
</evidence>
<evidence type="ECO:0000256" key="7">
    <source>
        <dbReference type="SAM" id="MobiDB-lite"/>
    </source>
</evidence>
<evidence type="ECO:0000269" key="8">
    <source>
    </source>
</evidence>
<name>FGFR4_RAT</name>
<reference key="1">
    <citation type="journal article" date="2004" name="Genome Res.">
        <title>The status, quality, and expansion of the NIH full-length cDNA project: the Mammalian Gene Collection (MGC).</title>
        <authorList>
            <consortium name="The MGC Project Team"/>
        </authorList>
    </citation>
    <scope>NUCLEOTIDE SEQUENCE [LARGE SCALE MRNA]</scope>
    <source>
        <tissue>Lung</tissue>
    </source>
</reference>
<reference key="2">
    <citation type="journal article" date="2007" name="J. Biol. Chem.">
        <title>Tissue-specific expression of betaKlotho and fibroblast growth factor (FGF) receptor isoforms determines metabolic activity of FGF19 and FGF21.</title>
        <authorList>
            <person name="Kurosu H."/>
            <person name="Choi M."/>
            <person name="Ogawa Y."/>
            <person name="Dickson A.S."/>
            <person name="Goetz R."/>
            <person name="Eliseenkova A.V."/>
            <person name="Mohammadi M."/>
            <person name="Rosenblatt K.P."/>
            <person name="Kliewer S.A."/>
            <person name="Kuro-o M."/>
        </authorList>
    </citation>
    <scope>FUNCTION AS FGF19 RECEPTOR</scope>
</reference>
<gene>
    <name type="primary">Fgfr4</name>
</gene>
<accession>Q498D6</accession>
<sequence>MWLLLALLSIFQETPAFSLEASEEMEQEPCPAPISEQQEQVLTVALGQPVRLCCGRTERGRHWYKEGSRLASAGRVRGWRGRLEIASFLPEDAGRYLCLARGSMTVVHNLTLIMDDSLPSINNEDPKTLSSSSSGHSYLQQAPYWTHPQRMEKKLHAVPAGNTVKFRCPAAGNPMPTIHWLKNGQAFHGENRIGGIRLRHQHWSLVMESVVPSDRGTYTCLVENSLGSIRYSYLLDVLERSPHRPILQAGLPANTTAVVGSNVELLCKVYSDAQPHIQWLKHIVINGSSFGADGFPYVQVLKTTDINSSEVEVLYLRNVSAEDAGEYTCLAGNSIGLSYQSAWLTVLPAEEEDLAWTTATSEARYTDIILYVSGSLALVLLLLLAGVYHRQAIHGHHSRQPVTVQKLSRFPLARQFSLESRSSGKSSLSLVRGVRLSSSGPPLLTGLVSLDLPLDPLWEFPRDRLVLGKPLGEGCFGQVVRAEALGMDSSRPDQTSTVAVKMLKDNASDKDLADLISEMEMMKLIGRHKNIINLLGVCTQEGPLYVIVEYAAKGNLREFLRARRPPGPDLSPDGPRSSEGPLSFPALVSCAYQVARGMQYLESRKCIHRDLAARNVLVTEDDVMKIADFGLARGVHHIDYYKKTSNGRLPVKWMAPEALFDRVYTHQSDVWSFGILLWEIFTLGGSPYPGIPVEELFSLLREGHRMERPPNCPSELYGLMRECWHAAPSQRPTFKQLVEALDKVLLAVSEEYLDLRLTFGPYSPNNGDASSTCSSSDSVFSHDPLPLEPSPFPFPEAQTT</sequence>
<dbReference type="EC" id="2.7.10.1"/>
<dbReference type="EMBL" id="BC100260">
    <property type="protein sequence ID" value="AAI00261.1"/>
    <property type="molecule type" value="mRNA"/>
</dbReference>
<dbReference type="RefSeq" id="NP_001103374.1">
    <property type="nucleotide sequence ID" value="NM_001109904.1"/>
</dbReference>
<dbReference type="SMR" id="Q498D6"/>
<dbReference type="FunCoup" id="Q498D6">
    <property type="interactions" value="656"/>
</dbReference>
<dbReference type="STRING" id="10116.ENSRNOP00000069871"/>
<dbReference type="BindingDB" id="Q498D6"/>
<dbReference type="ChEMBL" id="CHEMBL4802008"/>
<dbReference type="GlyCosmos" id="Q498D6">
    <property type="glycosylation" value="4 sites, No reported glycans"/>
</dbReference>
<dbReference type="GlyGen" id="Q498D6">
    <property type="glycosylation" value="4 sites"/>
</dbReference>
<dbReference type="iPTMnet" id="Q498D6"/>
<dbReference type="PhosphoSitePlus" id="Q498D6"/>
<dbReference type="PaxDb" id="10116-ENSRNOP00000050988"/>
<dbReference type="ABCD" id="Q498D6">
    <property type="antibodies" value="1 sequenced antibody"/>
</dbReference>
<dbReference type="GeneID" id="25114"/>
<dbReference type="KEGG" id="rno:25114"/>
<dbReference type="UCSC" id="RGD:2612">
    <property type="organism name" value="rat"/>
</dbReference>
<dbReference type="AGR" id="RGD:2612"/>
<dbReference type="CTD" id="2264"/>
<dbReference type="RGD" id="2612">
    <property type="gene designation" value="Fgfr4"/>
</dbReference>
<dbReference type="VEuPathDB" id="HostDB:ENSRNOG00000016763"/>
<dbReference type="eggNOG" id="KOG0200">
    <property type="taxonomic scope" value="Eukaryota"/>
</dbReference>
<dbReference type="HOGENOM" id="CLU_000288_74_3_1"/>
<dbReference type="InParanoid" id="Q498D6"/>
<dbReference type="PhylomeDB" id="Q498D6"/>
<dbReference type="TreeFam" id="TF316307"/>
<dbReference type="Reactome" id="R-RNO-109704">
    <property type="pathway name" value="PI3K Cascade"/>
</dbReference>
<dbReference type="Reactome" id="R-RNO-1257604">
    <property type="pathway name" value="PIP3 activates AKT signaling"/>
</dbReference>
<dbReference type="Reactome" id="R-RNO-1307965">
    <property type="pathway name" value="betaKlotho-mediated ligand binding"/>
</dbReference>
<dbReference type="Reactome" id="R-RNO-190322">
    <property type="pathway name" value="FGFR4 ligand binding and activation"/>
</dbReference>
<dbReference type="Reactome" id="R-RNO-5654228">
    <property type="pathway name" value="Phospholipase C-mediated cascade, FGFR4"/>
</dbReference>
<dbReference type="Reactome" id="R-RNO-5654712">
    <property type="pathway name" value="FRS-mediated FGFR4 signaling"/>
</dbReference>
<dbReference type="Reactome" id="R-RNO-5654719">
    <property type="pathway name" value="SHC-mediated cascade:FGFR4"/>
</dbReference>
<dbReference type="Reactome" id="R-RNO-5654720">
    <property type="pathway name" value="PI-3K cascade:FGFR4"/>
</dbReference>
<dbReference type="Reactome" id="R-RNO-5654733">
    <property type="pathway name" value="Negative regulation of FGFR4 signaling"/>
</dbReference>
<dbReference type="Reactome" id="R-RNO-5673001">
    <property type="pathway name" value="RAF/MAP kinase cascade"/>
</dbReference>
<dbReference type="Reactome" id="R-RNO-6811558">
    <property type="pathway name" value="PI5P, PP2A and IER3 Regulate PI3K/AKT Signaling"/>
</dbReference>
<dbReference type="PRO" id="PR:Q498D6"/>
<dbReference type="Proteomes" id="UP000002494">
    <property type="component" value="Chromosome 17"/>
</dbReference>
<dbReference type="Bgee" id="ENSRNOG00000016763">
    <property type="expression patterns" value="Expressed in lung and 15 other cell types or tissues"/>
</dbReference>
<dbReference type="GO" id="GO:0005911">
    <property type="term" value="C:cell-cell junction"/>
    <property type="evidence" value="ECO:0000266"/>
    <property type="project" value="RGD"/>
</dbReference>
<dbReference type="GO" id="GO:0005783">
    <property type="term" value="C:endoplasmic reticulum"/>
    <property type="evidence" value="ECO:0000250"/>
    <property type="project" value="UniProtKB"/>
</dbReference>
<dbReference type="GO" id="GO:0005768">
    <property type="term" value="C:endosome"/>
    <property type="evidence" value="ECO:0007669"/>
    <property type="project" value="UniProtKB-SubCell"/>
</dbReference>
<dbReference type="GO" id="GO:0005794">
    <property type="term" value="C:Golgi apparatus"/>
    <property type="evidence" value="ECO:0000266"/>
    <property type="project" value="RGD"/>
</dbReference>
<dbReference type="GO" id="GO:0005886">
    <property type="term" value="C:plasma membrane"/>
    <property type="evidence" value="ECO:0000250"/>
    <property type="project" value="UniProtKB"/>
</dbReference>
<dbReference type="GO" id="GO:0043235">
    <property type="term" value="C:receptor complex"/>
    <property type="evidence" value="ECO:0000318"/>
    <property type="project" value="GO_Central"/>
</dbReference>
<dbReference type="GO" id="GO:0030133">
    <property type="term" value="C:transport vesicle"/>
    <property type="evidence" value="ECO:0000266"/>
    <property type="project" value="RGD"/>
</dbReference>
<dbReference type="GO" id="GO:0005524">
    <property type="term" value="F:ATP binding"/>
    <property type="evidence" value="ECO:0007669"/>
    <property type="project" value="UniProtKB-KW"/>
</dbReference>
<dbReference type="GO" id="GO:0017134">
    <property type="term" value="F:fibroblast growth factor binding"/>
    <property type="evidence" value="ECO:0000250"/>
    <property type="project" value="UniProtKB"/>
</dbReference>
<dbReference type="GO" id="GO:0005007">
    <property type="term" value="F:fibroblast growth factor receptor activity"/>
    <property type="evidence" value="ECO:0000353"/>
    <property type="project" value="MGI"/>
</dbReference>
<dbReference type="GO" id="GO:0008201">
    <property type="term" value="F:heparin binding"/>
    <property type="evidence" value="ECO:0000250"/>
    <property type="project" value="UniProtKB"/>
</dbReference>
<dbReference type="GO" id="GO:0061144">
    <property type="term" value="P:alveolar secondary septum development"/>
    <property type="evidence" value="ECO:0000266"/>
    <property type="project" value="RGD"/>
</dbReference>
<dbReference type="GO" id="GO:0016477">
    <property type="term" value="P:cell migration"/>
    <property type="evidence" value="ECO:0000250"/>
    <property type="project" value="UniProtKB"/>
</dbReference>
<dbReference type="GO" id="GO:0042632">
    <property type="term" value="P:cholesterol homeostasis"/>
    <property type="evidence" value="ECO:0000250"/>
    <property type="project" value="UniProtKB"/>
</dbReference>
<dbReference type="GO" id="GO:0008543">
    <property type="term" value="P:fibroblast growth factor receptor signaling pathway"/>
    <property type="evidence" value="ECO:0000353"/>
    <property type="project" value="MGI"/>
</dbReference>
<dbReference type="GO" id="GO:0042593">
    <property type="term" value="P:glucose homeostasis"/>
    <property type="evidence" value="ECO:0000250"/>
    <property type="project" value="UniProtKB"/>
</dbReference>
<dbReference type="GO" id="GO:0030324">
    <property type="term" value="P:lung development"/>
    <property type="evidence" value="ECO:0000266"/>
    <property type="project" value="RGD"/>
</dbReference>
<dbReference type="GO" id="GO:0090272">
    <property type="term" value="P:negative regulation of fibroblast growth factor production"/>
    <property type="evidence" value="ECO:0000266"/>
    <property type="project" value="RGD"/>
</dbReference>
<dbReference type="GO" id="GO:0010629">
    <property type="term" value="P:negative regulation of gene expression"/>
    <property type="evidence" value="ECO:0000266"/>
    <property type="project" value="RGD"/>
</dbReference>
<dbReference type="GO" id="GO:0001759">
    <property type="term" value="P:organ induction"/>
    <property type="evidence" value="ECO:0000266"/>
    <property type="project" value="RGD"/>
</dbReference>
<dbReference type="GO" id="GO:0018108">
    <property type="term" value="P:peptidyl-tyrosine phosphorylation"/>
    <property type="evidence" value="ECO:0000250"/>
    <property type="project" value="UniProtKB"/>
</dbReference>
<dbReference type="GO" id="GO:0055062">
    <property type="term" value="P:phosphate ion homeostasis"/>
    <property type="evidence" value="ECO:0000250"/>
    <property type="project" value="UniProtKB"/>
</dbReference>
<dbReference type="GO" id="GO:0043085">
    <property type="term" value="P:positive regulation of catalytic activity"/>
    <property type="evidence" value="ECO:0000250"/>
    <property type="project" value="UniProtKB"/>
</dbReference>
<dbReference type="GO" id="GO:0008284">
    <property type="term" value="P:positive regulation of cell population proliferation"/>
    <property type="evidence" value="ECO:0000250"/>
    <property type="project" value="UniProtKB"/>
</dbReference>
<dbReference type="GO" id="GO:2000573">
    <property type="term" value="P:positive regulation of DNA biosynthetic process"/>
    <property type="evidence" value="ECO:0000250"/>
    <property type="project" value="UniProtKB"/>
</dbReference>
<dbReference type="GO" id="GO:0070374">
    <property type="term" value="P:positive regulation of ERK1 and ERK2 cascade"/>
    <property type="evidence" value="ECO:0000250"/>
    <property type="project" value="UniProtKB"/>
</dbReference>
<dbReference type="GO" id="GO:0010628">
    <property type="term" value="P:positive regulation of gene expression"/>
    <property type="evidence" value="ECO:0000266"/>
    <property type="project" value="RGD"/>
</dbReference>
<dbReference type="GO" id="GO:2000830">
    <property type="term" value="P:positive regulation of parathyroid hormone secretion"/>
    <property type="evidence" value="ECO:0000266"/>
    <property type="project" value="RGD"/>
</dbReference>
<dbReference type="GO" id="GO:0045862">
    <property type="term" value="P:positive regulation of proteolysis"/>
    <property type="evidence" value="ECO:0000250"/>
    <property type="project" value="UniProtKB"/>
</dbReference>
<dbReference type="GO" id="GO:0046777">
    <property type="term" value="P:protein autophosphorylation"/>
    <property type="evidence" value="ECO:0000250"/>
    <property type="project" value="UniProtKB"/>
</dbReference>
<dbReference type="GO" id="GO:0070857">
    <property type="term" value="P:regulation of bile acid biosynthetic process"/>
    <property type="evidence" value="ECO:0000250"/>
    <property type="project" value="UniProtKB"/>
</dbReference>
<dbReference type="GO" id="GO:0010715">
    <property type="term" value="P:regulation of extracellular matrix disassembly"/>
    <property type="evidence" value="ECO:0000250"/>
    <property type="project" value="UniProtKB"/>
</dbReference>
<dbReference type="GO" id="GO:0019216">
    <property type="term" value="P:regulation of lipid metabolic process"/>
    <property type="evidence" value="ECO:0000250"/>
    <property type="project" value="UniProtKB"/>
</dbReference>
<dbReference type="GO" id="GO:0010966">
    <property type="term" value="P:regulation of phosphate transport"/>
    <property type="evidence" value="ECO:0000266"/>
    <property type="project" value="RGD"/>
</dbReference>
<dbReference type="GO" id="GO:0051174">
    <property type="term" value="P:regulation of phosphorus metabolic process"/>
    <property type="evidence" value="ECO:0000266"/>
    <property type="project" value="RGD"/>
</dbReference>
<dbReference type="GO" id="GO:0070640">
    <property type="term" value="P:vitamin D3 metabolic process"/>
    <property type="evidence" value="ECO:0000266"/>
    <property type="project" value="RGD"/>
</dbReference>
<dbReference type="FunFam" id="1.10.510.10:FF:000007">
    <property type="entry name" value="Fibroblast growth factor receptor"/>
    <property type="match status" value="1"/>
</dbReference>
<dbReference type="FunFam" id="2.60.40.10:FF:000016">
    <property type="entry name" value="Fibroblast growth factor receptor"/>
    <property type="match status" value="1"/>
</dbReference>
<dbReference type="FunFam" id="2.60.40.10:FF:000020">
    <property type="entry name" value="Fibroblast growth factor receptor"/>
    <property type="match status" value="1"/>
</dbReference>
<dbReference type="FunFam" id="2.60.40.10:FF:000730">
    <property type="entry name" value="Fibroblast growth factor receptor"/>
    <property type="match status" value="1"/>
</dbReference>
<dbReference type="FunFam" id="3.30.200.20:FF:000011">
    <property type="entry name" value="Fibroblast growth factor receptor"/>
    <property type="match status" value="1"/>
</dbReference>
<dbReference type="Gene3D" id="2.60.40.10">
    <property type="entry name" value="Immunoglobulins"/>
    <property type="match status" value="3"/>
</dbReference>
<dbReference type="Gene3D" id="3.30.200.20">
    <property type="entry name" value="Phosphorylase Kinase, domain 1"/>
    <property type="match status" value="1"/>
</dbReference>
<dbReference type="Gene3D" id="1.10.510.10">
    <property type="entry name" value="Transferase(Phosphotransferase) domain 1"/>
    <property type="match status" value="1"/>
</dbReference>
<dbReference type="InterPro" id="IPR016248">
    <property type="entry name" value="FGF_rcpt_fam"/>
</dbReference>
<dbReference type="InterPro" id="IPR007110">
    <property type="entry name" value="Ig-like_dom"/>
</dbReference>
<dbReference type="InterPro" id="IPR036179">
    <property type="entry name" value="Ig-like_dom_sf"/>
</dbReference>
<dbReference type="InterPro" id="IPR013783">
    <property type="entry name" value="Ig-like_fold"/>
</dbReference>
<dbReference type="InterPro" id="IPR013098">
    <property type="entry name" value="Ig_I-set"/>
</dbReference>
<dbReference type="InterPro" id="IPR003599">
    <property type="entry name" value="Ig_sub"/>
</dbReference>
<dbReference type="InterPro" id="IPR003598">
    <property type="entry name" value="Ig_sub2"/>
</dbReference>
<dbReference type="InterPro" id="IPR011009">
    <property type="entry name" value="Kinase-like_dom_sf"/>
</dbReference>
<dbReference type="InterPro" id="IPR000719">
    <property type="entry name" value="Prot_kinase_dom"/>
</dbReference>
<dbReference type="InterPro" id="IPR017441">
    <property type="entry name" value="Protein_kinase_ATP_BS"/>
</dbReference>
<dbReference type="InterPro" id="IPR050122">
    <property type="entry name" value="RTK"/>
</dbReference>
<dbReference type="InterPro" id="IPR001245">
    <property type="entry name" value="Ser-Thr/Tyr_kinase_cat_dom"/>
</dbReference>
<dbReference type="InterPro" id="IPR008266">
    <property type="entry name" value="Tyr_kinase_AS"/>
</dbReference>
<dbReference type="InterPro" id="IPR020635">
    <property type="entry name" value="Tyr_kinase_cat_dom"/>
</dbReference>
<dbReference type="PANTHER" id="PTHR24416:SF343">
    <property type="entry name" value="FIBROBLAST GROWTH FACTOR RECEPTOR 4"/>
    <property type="match status" value="1"/>
</dbReference>
<dbReference type="PANTHER" id="PTHR24416">
    <property type="entry name" value="TYROSINE-PROTEIN KINASE RECEPTOR"/>
    <property type="match status" value="1"/>
</dbReference>
<dbReference type="Pfam" id="PF07679">
    <property type="entry name" value="I-set"/>
    <property type="match status" value="1"/>
</dbReference>
<dbReference type="Pfam" id="PF13927">
    <property type="entry name" value="Ig_3"/>
    <property type="match status" value="1"/>
</dbReference>
<dbReference type="Pfam" id="PF07714">
    <property type="entry name" value="PK_Tyr_Ser-Thr"/>
    <property type="match status" value="1"/>
</dbReference>
<dbReference type="PIRSF" id="PIRSF000628">
    <property type="entry name" value="FGFR"/>
    <property type="match status" value="1"/>
</dbReference>
<dbReference type="PRINTS" id="PR00109">
    <property type="entry name" value="TYRKINASE"/>
</dbReference>
<dbReference type="SMART" id="SM00409">
    <property type="entry name" value="IG"/>
    <property type="match status" value="3"/>
</dbReference>
<dbReference type="SMART" id="SM00408">
    <property type="entry name" value="IGc2"/>
    <property type="match status" value="3"/>
</dbReference>
<dbReference type="SMART" id="SM00219">
    <property type="entry name" value="TyrKc"/>
    <property type="match status" value="1"/>
</dbReference>
<dbReference type="SUPFAM" id="SSF48726">
    <property type="entry name" value="Immunoglobulin"/>
    <property type="match status" value="3"/>
</dbReference>
<dbReference type="SUPFAM" id="SSF56112">
    <property type="entry name" value="Protein kinase-like (PK-like)"/>
    <property type="match status" value="1"/>
</dbReference>
<dbReference type="PROSITE" id="PS50835">
    <property type="entry name" value="IG_LIKE"/>
    <property type="match status" value="2"/>
</dbReference>
<dbReference type="PROSITE" id="PS00107">
    <property type="entry name" value="PROTEIN_KINASE_ATP"/>
    <property type="match status" value="1"/>
</dbReference>
<dbReference type="PROSITE" id="PS50011">
    <property type="entry name" value="PROTEIN_KINASE_DOM"/>
    <property type="match status" value="1"/>
</dbReference>
<dbReference type="PROSITE" id="PS00109">
    <property type="entry name" value="PROTEIN_KINASE_TYR"/>
    <property type="match status" value="1"/>
</dbReference>
<protein>
    <recommendedName>
        <fullName>Fibroblast growth factor receptor 4</fullName>
        <shortName>FGFR-4</shortName>
        <ecNumber>2.7.10.1</ecNumber>
    </recommendedName>
    <cdAntigenName>CD334</cdAntigenName>
</protein>
<keyword id="KW-0067">ATP-binding</keyword>
<keyword id="KW-1003">Cell membrane</keyword>
<keyword id="KW-1015">Disulfide bond</keyword>
<keyword id="KW-0256">Endoplasmic reticulum</keyword>
<keyword id="KW-0967">Endosome</keyword>
<keyword id="KW-0325">Glycoprotein</keyword>
<keyword id="KW-0393">Immunoglobulin domain</keyword>
<keyword id="KW-0418">Kinase</keyword>
<keyword id="KW-0472">Membrane</keyword>
<keyword id="KW-0547">Nucleotide-binding</keyword>
<keyword id="KW-0597">Phosphoprotein</keyword>
<keyword id="KW-0675">Receptor</keyword>
<keyword id="KW-1185">Reference proteome</keyword>
<keyword id="KW-0677">Repeat</keyword>
<keyword id="KW-0732">Signal</keyword>
<keyword id="KW-0808">Transferase</keyword>
<keyword id="KW-0812">Transmembrane</keyword>
<keyword id="KW-1133">Transmembrane helix</keyword>
<keyword id="KW-0829">Tyrosine-protein kinase</keyword>
<keyword id="KW-0832">Ubl conjugation</keyword>
<feature type="signal peptide" evidence="3">
    <location>
        <begin position="1"/>
        <end position="16"/>
    </location>
</feature>
<feature type="chain" id="PRO_0000227548" description="Fibroblast growth factor receptor 4">
    <location>
        <begin position="17"/>
        <end position="800"/>
    </location>
</feature>
<feature type="topological domain" description="Extracellular" evidence="3">
    <location>
        <begin position="17"/>
        <end position="367"/>
    </location>
</feature>
<feature type="transmembrane region" description="Helical" evidence="3">
    <location>
        <begin position="368"/>
        <end position="388"/>
    </location>
</feature>
<feature type="topological domain" description="Cytoplasmic" evidence="3">
    <location>
        <begin position="389"/>
        <end position="800"/>
    </location>
</feature>
<feature type="domain" description="Ig-like C2-type 1">
    <location>
        <begin position="17"/>
        <end position="115"/>
    </location>
</feature>
<feature type="domain" description="Ig-like C2-type 2">
    <location>
        <begin position="148"/>
        <end position="236"/>
    </location>
</feature>
<feature type="domain" description="Ig-like C2-type 3">
    <location>
        <begin position="245"/>
        <end position="345"/>
    </location>
</feature>
<feature type="domain" description="Protein kinase" evidence="5">
    <location>
        <begin position="465"/>
        <end position="753"/>
    </location>
</feature>
<feature type="region of interest" description="Disordered" evidence="7">
    <location>
        <begin position="768"/>
        <end position="800"/>
    </location>
</feature>
<feature type="compositionally biased region" description="Low complexity" evidence="7">
    <location>
        <begin position="770"/>
        <end position="781"/>
    </location>
</feature>
<feature type="active site" description="Proton acceptor" evidence="5 6">
    <location>
        <position position="610"/>
    </location>
</feature>
<feature type="binding site" evidence="5">
    <location>
        <begin position="471"/>
        <end position="479"/>
    </location>
    <ligand>
        <name>ATP</name>
        <dbReference type="ChEBI" id="CHEBI:30616"/>
    </ligand>
</feature>
<feature type="binding site" evidence="5">
    <location>
        <position position="501"/>
    </location>
    <ligand>
        <name>ATP</name>
        <dbReference type="ChEBI" id="CHEBI:30616"/>
    </ligand>
</feature>
<feature type="modified residue" description="Phosphoserine" evidence="2">
    <location>
        <position position="571"/>
    </location>
</feature>
<feature type="modified residue" description="Phosphotyrosine; by autocatalysis" evidence="2">
    <location>
        <position position="640"/>
    </location>
</feature>
<feature type="modified residue" description="Phosphotyrosine; by autocatalysis" evidence="2">
    <location>
        <position position="641"/>
    </location>
</feature>
<feature type="modified residue" description="Phosphotyrosine; by autocatalysis" evidence="2">
    <location>
        <position position="752"/>
    </location>
</feature>
<feature type="glycosylation site" description="N-linked (GlcNAc...) asparagine" evidence="3">
    <location>
        <position position="109"/>
    </location>
</feature>
<feature type="glycosylation site" description="N-linked (GlcNAc...) asparagine" evidence="3">
    <location>
        <position position="254"/>
    </location>
</feature>
<feature type="glycosylation site" description="N-linked (GlcNAc...) asparagine" evidence="3">
    <location>
        <position position="286"/>
    </location>
</feature>
<feature type="glycosylation site" description="N-linked (GlcNAc...) asparagine" evidence="3">
    <location>
        <position position="307"/>
    </location>
</feature>
<feature type="disulfide bond" evidence="4">
    <location>
        <begin position="54"/>
        <end position="98"/>
    </location>
</feature>
<feature type="disulfide bond" evidence="4">
    <location>
        <begin position="168"/>
        <end position="220"/>
    </location>
</feature>
<feature type="disulfide bond" evidence="4">
    <location>
        <begin position="267"/>
        <end position="329"/>
    </location>
</feature>
<organism>
    <name type="scientific">Rattus norvegicus</name>
    <name type="common">Rat</name>
    <dbReference type="NCBI Taxonomy" id="10116"/>
    <lineage>
        <taxon>Eukaryota</taxon>
        <taxon>Metazoa</taxon>
        <taxon>Chordata</taxon>
        <taxon>Craniata</taxon>
        <taxon>Vertebrata</taxon>
        <taxon>Euteleostomi</taxon>
        <taxon>Mammalia</taxon>
        <taxon>Eutheria</taxon>
        <taxon>Euarchontoglires</taxon>
        <taxon>Glires</taxon>
        <taxon>Rodentia</taxon>
        <taxon>Myomorpha</taxon>
        <taxon>Muroidea</taxon>
        <taxon>Muridae</taxon>
        <taxon>Murinae</taxon>
        <taxon>Rattus</taxon>
    </lineage>
</organism>